<name>GLMM_THEKO</name>
<comment type="function">
    <text evidence="1">Catalyzes the conversion of glucosamine-6-phosphate to glucosamine-1-phosphate (By similarity). Does not display phosphoglucomutase (PGM) or phosphomannomutase (PMM) activities.</text>
</comment>
<comment type="catalytic activity">
    <reaction>
        <text>alpha-D-glucosamine 1-phosphate = D-glucosamine 6-phosphate</text>
        <dbReference type="Rhea" id="RHEA:23424"/>
        <dbReference type="ChEBI" id="CHEBI:58516"/>
        <dbReference type="ChEBI" id="CHEBI:58725"/>
        <dbReference type="EC" id="5.4.2.10"/>
    </reaction>
</comment>
<comment type="cofactor">
    <cofactor evidence="1">
        <name>Mg(2+)</name>
        <dbReference type="ChEBI" id="CHEBI:18420"/>
    </cofactor>
    <text evidence="1">Binds 1 Mg(2+) ion per subunit.</text>
</comment>
<comment type="PTM">
    <text evidence="1">Activated by phosphorylation.</text>
</comment>
<comment type="similarity">
    <text evidence="2">Belongs to the phosphohexose mutase family.</text>
</comment>
<gene>
    <name type="primary">glmM</name>
    <name type="ordered locus">TK2185</name>
</gene>
<feature type="chain" id="PRO_0000337825" description="Probable phosphoglucosamine mutase">
    <location>
        <begin position="1"/>
        <end position="449"/>
    </location>
</feature>
<feature type="active site" description="Phosphoserine intermediate" evidence="1">
    <location>
        <position position="96"/>
    </location>
</feature>
<feature type="binding site" description="via phosphate group" evidence="1">
    <location>
        <position position="96"/>
    </location>
    <ligand>
        <name>Mg(2+)</name>
        <dbReference type="ChEBI" id="CHEBI:18420"/>
    </ligand>
</feature>
<feature type="binding site" evidence="1">
    <location>
        <position position="233"/>
    </location>
    <ligand>
        <name>Mg(2+)</name>
        <dbReference type="ChEBI" id="CHEBI:18420"/>
    </ligand>
</feature>
<feature type="binding site" evidence="1">
    <location>
        <position position="235"/>
    </location>
    <ligand>
        <name>Mg(2+)</name>
        <dbReference type="ChEBI" id="CHEBI:18420"/>
    </ligand>
</feature>
<feature type="binding site" evidence="1">
    <location>
        <position position="237"/>
    </location>
    <ligand>
        <name>Mg(2+)</name>
        <dbReference type="ChEBI" id="CHEBI:18420"/>
    </ligand>
</feature>
<feature type="modified residue" description="Phosphoserine" evidence="1">
    <location>
        <position position="96"/>
    </location>
</feature>
<protein>
    <recommendedName>
        <fullName>Probable phosphoglucosamine mutase</fullName>
        <ecNumber>5.4.2.10</ecNumber>
    </recommendedName>
</protein>
<dbReference type="EC" id="5.4.2.10"/>
<dbReference type="EMBL" id="AB126240">
    <property type="protein sequence ID" value="BAD42439.1"/>
    <property type="molecule type" value="Genomic_DNA"/>
</dbReference>
<dbReference type="EMBL" id="AP006878">
    <property type="protein sequence ID" value="BAD86374.1"/>
    <property type="molecule type" value="Genomic_DNA"/>
</dbReference>
<dbReference type="RefSeq" id="WP_011251135.1">
    <property type="nucleotide sequence ID" value="NC_006624.1"/>
</dbReference>
<dbReference type="SMR" id="Q68BJ7"/>
<dbReference type="FunCoup" id="Q68BJ7">
    <property type="interactions" value="89"/>
</dbReference>
<dbReference type="STRING" id="69014.TK2185"/>
<dbReference type="EnsemblBacteria" id="BAD86374">
    <property type="protein sequence ID" value="BAD86374"/>
    <property type="gene ID" value="TK2185"/>
</dbReference>
<dbReference type="GeneID" id="78448725"/>
<dbReference type="KEGG" id="tko:TK2185"/>
<dbReference type="PATRIC" id="fig|69014.16.peg.2140"/>
<dbReference type="eggNOG" id="arCOG00767">
    <property type="taxonomic scope" value="Archaea"/>
</dbReference>
<dbReference type="HOGENOM" id="CLU_016950_7_1_2"/>
<dbReference type="InParanoid" id="Q68BJ7"/>
<dbReference type="OrthoDB" id="10363at2157"/>
<dbReference type="PhylomeDB" id="Q68BJ7"/>
<dbReference type="Proteomes" id="UP000000536">
    <property type="component" value="Chromosome"/>
</dbReference>
<dbReference type="GO" id="GO:0000287">
    <property type="term" value="F:magnesium ion binding"/>
    <property type="evidence" value="ECO:0007669"/>
    <property type="project" value="UniProtKB-UniRule"/>
</dbReference>
<dbReference type="GO" id="GO:0008966">
    <property type="term" value="F:phosphoglucosamine mutase activity"/>
    <property type="evidence" value="ECO:0007669"/>
    <property type="project" value="UniProtKB-UniRule"/>
</dbReference>
<dbReference type="GO" id="GO:0004615">
    <property type="term" value="F:phosphomannomutase activity"/>
    <property type="evidence" value="ECO:0000318"/>
    <property type="project" value="GO_Central"/>
</dbReference>
<dbReference type="GO" id="GO:0005975">
    <property type="term" value="P:carbohydrate metabolic process"/>
    <property type="evidence" value="ECO:0007669"/>
    <property type="project" value="InterPro"/>
</dbReference>
<dbReference type="CDD" id="cd03087">
    <property type="entry name" value="PGM_like1"/>
    <property type="match status" value="1"/>
</dbReference>
<dbReference type="FunFam" id="3.40.120.10:FF:000001">
    <property type="entry name" value="Phosphoglucosamine mutase"/>
    <property type="match status" value="1"/>
</dbReference>
<dbReference type="FunFam" id="3.30.310.50:FF:000009">
    <property type="entry name" value="Probable phosphoglucosamine mutase"/>
    <property type="match status" value="1"/>
</dbReference>
<dbReference type="Gene3D" id="3.40.120.10">
    <property type="entry name" value="Alpha-D-Glucose-1,6-Bisphosphate, subunit A, domain 3"/>
    <property type="match status" value="3"/>
</dbReference>
<dbReference type="Gene3D" id="3.30.310.50">
    <property type="entry name" value="Alpha-D-phosphohexomutase, C-terminal domain"/>
    <property type="match status" value="1"/>
</dbReference>
<dbReference type="HAMAP" id="MF_01554_A">
    <property type="entry name" value="GlmM_A"/>
    <property type="match status" value="1"/>
</dbReference>
<dbReference type="InterPro" id="IPR005844">
    <property type="entry name" value="A-D-PHexomutase_a/b/a-I"/>
</dbReference>
<dbReference type="InterPro" id="IPR016055">
    <property type="entry name" value="A-D-PHexomutase_a/b/a-I/II/III"/>
</dbReference>
<dbReference type="InterPro" id="IPR005845">
    <property type="entry name" value="A-D-PHexomutase_a/b/a-II"/>
</dbReference>
<dbReference type="InterPro" id="IPR005846">
    <property type="entry name" value="A-D-PHexomutase_a/b/a-III"/>
</dbReference>
<dbReference type="InterPro" id="IPR005843">
    <property type="entry name" value="A-D-PHexomutase_C"/>
</dbReference>
<dbReference type="InterPro" id="IPR036900">
    <property type="entry name" value="A-D-PHexomutase_C_sf"/>
</dbReference>
<dbReference type="InterPro" id="IPR016066">
    <property type="entry name" value="A-D-PHexomutase_CS"/>
</dbReference>
<dbReference type="InterPro" id="IPR005841">
    <property type="entry name" value="Alpha-D-phosphohexomutase_SF"/>
</dbReference>
<dbReference type="InterPro" id="IPR023666">
    <property type="entry name" value="GlmM_arc"/>
</dbReference>
<dbReference type="InterPro" id="IPR024086">
    <property type="entry name" value="GlmM_arc-type"/>
</dbReference>
<dbReference type="NCBIfam" id="TIGR03990">
    <property type="entry name" value="Arch_GlmM"/>
    <property type="match status" value="1"/>
</dbReference>
<dbReference type="PANTHER" id="PTHR43771">
    <property type="entry name" value="PHOSPHOMANNOMUTASE"/>
    <property type="match status" value="1"/>
</dbReference>
<dbReference type="PANTHER" id="PTHR43771:SF1">
    <property type="entry name" value="PHOSPHOMANNOMUTASE"/>
    <property type="match status" value="1"/>
</dbReference>
<dbReference type="Pfam" id="PF02878">
    <property type="entry name" value="PGM_PMM_I"/>
    <property type="match status" value="1"/>
</dbReference>
<dbReference type="Pfam" id="PF02879">
    <property type="entry name" value="PGM_PMM_II"/>
    <property type="match status" value="1"/>
</dbReference>
<dbReference type="Pfam" id="PF02880">
    <property type="entry name" value="PGM_PMM_III"/>
    <property type="match status" value="1"/>
</dbReference>
<dbReference type="Pfam" id="PF00408">
    <property type="entry name" value="PGM_PMM_IV"/>
    <property type="match status" value="1"/>
</dbReference>
<dbReference type="PRINTS" id="PR00509">
    <property type="entry name" value="PGMPMM"/>
</dbReference>
<dbReference type="SUPFAM" id="SSF55957">
    <property type="entry name" value="Phosphoglucomutase, C-terminal domain"/>
    <property type="match status" value="1"/>
</dbReference>
<dbReference type="SUPFAM" id="SSF53738">
    <property type="entry name" value="Phosphoglucomutase, first 3 domains"/>
    <property type="match status" value="3"/>
</dbReference>
<dbReference type="PROSITE" id="PS00710">
    <property type="entry name" value="PGM_PMM"/>
    <property type="match status" value="1"/>
</dbReference>
<keyword id="KW-0413">Isomerase</keyword>
<keyword id="KW-0460">Magnesium</keyword>
<keyword id="KW-0479">Metal-binding</keyword>
<keyword id="KW-0597">Phosphoprotein</keyword>
<keyword id="KW-1185">Reference proteome</keyword>
<evidence type="ECO:0000250" key="1"/>
<evidence type="ECO:0000305" key="2"/>
<proteinExistence type="evidence at protein level"/>
<accession>Q68BJ7</accession>
<organism>
    <name type="scientific">Thermococcus kodakarensis (strain ATCC BAA-918 / JCM 12380 / KOD1)</name>
    <name type="common">Pyrococcus kodakaraensis (strain KOD1)</name>
    <dbReference type="NCBI Taxonomy" id="69014"/>
    <lineage>
        <taxon>Archaea</taxon>
        <taxon>Methanobacteriati</taxon>
        <taxon>Methanobacteriota</taxon>
        <taxon>Thermococci</taxon>
        <taxon>Thermococcales</taxon>
        <taxon>Thermococcaceae</taxon>
        <taxon>Thermococcus</taxon>
    </lineage>
</organism>
<sequence length="449" mass="48662">MGKYFGTSGIREVFNEKLTPELALKVGKALGTYLGGGKVVIGKDTRTSGDVIKSAVISGLLSTGVDVIDIGLAPTPLTGFAIKLYGADAGVTITASHNPPEYNGIKVWQANGMAYTSEMERELESIMDSGNFKKAPWNEIGTLRRADPSEEYINAALKFVKLENSYTVVLDSGNGAGSVVSPYLQRELGNRVISLNSHPSGFFVRELEPNAKSLSALAKTVRVMKADVGIAHDGDADRIGVVDDQGNFVEYEVMLSLIAGYMLRKFGKGKIVTTVDAGFALDDYLRPLGGEVIRTRVGDVAVADELAKHGGVFGGEPSGTWIIPQWNLTPDGIFAGALVLEMIDRLGPISELAKEVPRYVTLRAKIPCPNEKKAKAMEIIAREALKTFDYEGLIDIDGIRIENGDWWILFRPSGTEPIMRITLEAHEEEKAKELMGKAERLVKKAISEA</sequence>
<reference key="1">
    <citation type="journal article" date="2004" name="J. Bacteriol.">
        <title>Among multiple phosphomannomutase gene orthologues, only one gene encodes a protein with phosphoglucomutase and phosphomannomutase activities in Thermococcus kodakaraensis.</title>
        <authorList>
            <person name="Rashid N."/>
            <person name="Kanai T."/>
            <person name="Atomi H."/>
            <person name="Imanaka T."/>
        </authorList>
    </citation>
    <scope>NUCLEOTIDE SEQUENCE [GENOMIC DNA]</scope>
    <scope>NO FUNCTION AS A PGM/PMM</scope>
    <source>
        <strain>ATCC BAA-918 / JCM 12380 / KOD1</strain>
    </source>
</reference>
<reference key="2">
    <citation type="journal article" date="2005" name="Genome Res.">
        <title>Complete genome sequence of the hyperthermophilic archaeon Thermococcus kodakaraensis KOD1 and comparison with Pyrococcus genomes.</title>
        <authorList>
            <person name="Fukui T."/>
            <person name="Atomi H."/>
            <person name="Kanai T."/>
            <person name="Matsumi R."/>
            <person name="Fujiwara S."/>
            <person name="Imanaka T."/>
        </authorList>
    </citation>
    <scope>NUCLEOTIDE SEQUENCE [LARGE SCALE GENOMIC DNA]</scope>
    <source>
        <strain>ATCC BAA-918 / JCM 12380 / KOD1</strain>
    </source>
</reference>